<feature type="signal peptide" evidence="1">
    <location>
        <begin position="1"/>
        <end position="21"/>
    </location>
</feature>
<feature type="chain" id="PRO_0000079339" description="Protein CreA">
    <location>
        <begin position="22"/>
        <end position="157"/>
    </location>
</feature>
<evidence type="ECO:0000255" key="1"/>
<evidence type="ECO:0000269" key="2">
    <source>
    </source>
</evidence>
<name>CREA_ECOLI</name>
<dbReference type="EMBL" id="M13608">
    <property type="protein sequence ID" value="AAA24373.1"/>
    <property type="molecule type" value="Genomic_DNA"/>
</dbReference>
<dbReference type="EMBL" id="U14003">
    <property type="protein sequence ID" value="AAA97293.1"/>
    <property type="molecule type" value="Genomic_DNA"/>
</dbReference>
<dbReference type="EMBL" id="U00096">
    <property type="protein sequence ID" value="AAC77350.1"/>
    <property type="molecule type" value="Genomic_DNA"/>
</dbReference>
<dbReference type="EMBL" id="AP009048">
    <property type="protein sequence ID" value="BAE78386.1"/>
    <property type="molecule type" value="Genomic_DNA"/>
</dbReference>
<dbReference type="EMBL" id="M97495">
    <property type="protein sequence ID" value="AAA24568.1"/>
    <property type="molecule type" value="Genomic_DNA"/>
</dbReference>
<dbReference type="PIR" id="A25038">
    <property type="entry name" value="QQECF1"/>
</dbReference>
<dbReference type="RefSeq" id="NP_418814.1">
    <property type="nucleotide sequence ID" value="NC_000913.3"/>
</dbReference>
<dbReference type="RefSeq" id="WP_000875487.1">
    <property type="nucleotide sequence ID" value="NZ_STEB01000033.1"/>
</dbReference>
<dbReference type="BioGRID" id="4259351">
    <property type="interactions" value="11"/>
</dbReference>
<dbReference type="FunCoup" id="P0AE91">
    <property type="interactions" value="19"/>
</dbReference>
<dbReference type="IntAct" id="P0AE91">
    <property type="interactions" value="1"/>
</dbReference>
<dbReference type="STRING" id="511145.b4397"/>
<dbReference type="jPOST" id="P0AE91"/>
<dbReference type="PaxDb" id="511145-b4397"/>
<dbReference type="EnsemblBacteria" id="AAC77350">
    <property type="protein sequence ID" value="AAC77350"/>
    <property type="gene ID" value="b4397"/>
</dbReference>
<dbReference type="GeneID" id="93777448"/>
<dbReference type="GeneID" id="948920"/>
<dbReference type="KEGG" id="ecj:JW4360"/>
<dbReference type="KEGG" id="eco:b4397"/>
<dbReference type="KEGG" id="ecoc:C3026_23760"/>
<dbReference type="PATRIC" id="fig|511145.12.peg.4546"/>
<dbReference type="EchoBASE" id="EB1200"/>
<dbReference type="eggNOG" id="COG3045">
    <property type="taxonomic scope" value="Bacteria"/>
</dbReference>
<dbReference type="HOGENOM" id="CLU_109726_1_1_6"/>
<dbReference type="InParanoid" id="P0AE91"/>
<dbReference type="OMA" id="QGVTCYV"/>
<dbReference type="OrthoDB" id="9788409at2"/>
<dbReference type="PhylomeDB" id="P0AE91"/>
<dbReference type="BioCyc" id="EcoCyc:EG11217-MONOMER"/>
<dbReference type="PRO" id="PR:P0AE91"/>
<dbReference type="Proteomes" id="UP000000625">
    <property type="component" value="Chromosome"/>
</dbReference>
<dbReference type="GO" id="GO:0005829">
    <property type="term" value="C:cytosol"/>
    <property type="evidence" value="ECO:0000314"/>
    <property type="project" value="EcoCyc"/>
</dbReference>
<dbReference type="InterPro" id="IPR010292">
    <property type="entry name" value="Uncharacterised_CreA"/>
</dbReference>
<dbReference type="NCBIfam" id="NF008026">
    <property type="entry name" value="PRK10756.1"/>
    <property type="match status" value="1"/>
</dbReference>
<dbReference type="PANTHER" id="PTHR37952">
    <property type="match status" value="1"/>
</dbReference>
<dbReference type="PANTHER" id="PTHR37952:SF2">
    <property type="entry name" value="PROTEIN CREA"/>
    <property type="match status" value="1"/>
</dbReference>
<dbReference type="Pfam" id="PF05981">
    <property type="entry name" value="CreA"/>
    <property type="match status" value="1"/>
</dbReference>
<dbReference type="PIRSF" id="PIRSF003174">
    <property type="entry name" value="CreA"/>
    <property type="match status" value="1"/>
</dbReference>
<gene>
    <name type="primary">creA</name>
    <name type="synonym">yjjD</name>
    <name type="ordered locus">b4397</name>
    <name type="ordered locus">JW4360</name>
</gene>
<sequence>MKYKHLILSLSLIMLGPLAHAEEIGSVDTVFKMIGPDHKIVVEAFDDPDVKNVTCYVSRAKTGGIKGGLGLAEDTSDAAISCQQVGPIELSDRIKNGKAQGEVVFKKRTSLVFKSLQVVRFYDAKRNALAYLAYSDKVVEGSPKNAISAVPVMPWRQ</sequence>
<accession>P0AE91</accession>
<accession>P08367</accession>
<accession>Q2M5S0</accession>
<protein>
    <recommendedName>
        <fullName>Protein CreA</fullName>
    </recommendedName>
    <alternativeName>
        <fullName>Catabolite regulation protein A</fullName>
    </alternativeName>
</protein>
<organism>
    <name type="scientific">Escherichia coli (strain K12)</name>
    <dbReference type="NCBI Taxonomy" id="83333"/>
    <lineage>
        <taxon>Bacteria</taxon>
        <taxon>Pseudomonadati</taxon>
        <taxon>Pseudomonadota</taxon>
        <taxon>Gammaproteobacteria</taxon>
        <taxon>Enterobacterales</taxon>
        <taxon>Enterobacteriaceae</taxon>
        <taxon>Escherichia</taxon>
    </lineage>
</organism>
<proteinExistence type="inferred from homology"/>
<keyword id="KW-1185">Reference proteome</keyword>
<keyword id="KW-0732">Signal</keyword>
<reference key="1">
    <citation type="journal article" date="1986" name="J. Bacteriol.">
        <title>Nucleotide sequence of the phoM region of Escherichia coli: four open reading frames may constitute an operon.</title>
        <authorList>
            <person name="Amemura M."/>
            <person name="Makino K."/>
            <person name="Shinagawa H."/>
            <person name="Nakata A."/>
        </authorList>
    </citation>
    <scope>NUCLEOTIDE SEQUENCE [GENOMIC DNA]</scope>
</reference>
<reference key="2">
    <citation type="journal article" date="1995" name="Nucleic Acids Res.">
        <title>Analysis of the Escherichia coli genome VI: DNA sequence of the region from 92.8 through 100 minutes.</title>
        <authorList>
            <person name="Burland V.D."/>
            <person name="Plunkett G. III"/>
            <person name="Sofia H.J."/>
            <person name="Daniels D.L."/>
            <person name="Blattner F.R."/>
        </authorList>
    </citation>
    <scope>NUCLEOTIDE SEQUENCE [LARGE SCALE GENOMIC DNA]</scope>
    <source>
        <strain>K12 / MG1655 / ATCC 47076</strain>
    </source>
</reference>
<reference key="3">
    <citation type="journal article" date="1997" name="Science">
        <title>The complete genome sequence of Escherichia coli K-12.</title>
        <authorList>
            <person name="Blattner F.R."/>
            <person name="Plunkett G. III"/>
            <person name="Bloch C.A."/>
            <person name="Perna N.T."/>
            <person name="Burland V."/>
            <person name="Riley M."/>
            <person name="Collado-Vides J."/>
            <person name="Glasner J.D."/>
            <person name="Rode C.K."/>
            <person name="Mayhew G.F."/>
            <person name="Gregor J."/>
            <person name="Davis N.W."/>
            <person name="Kirkpatrick H.A."/>
            <person name="Goeden M.A."/>
            <person name="Rose D.J."/>
            <person name="Mau B."/>
            <person name="Shao Y."/>
        </authorList>
    </citation>
    <scope>NUCLEOTIDE SEQUENCE [LARGE SCALE GENOMIC DNA]</scope>
    <source>
        <strain>K12 / MG1655 / ATCC 47076</strain>
    </source>
</reference>
<reference key="4">
    <citation type="journal article" date="2006" name="Mol. Syst. Biol.">
        <title>Highly accurate genome sequences of Escherichia coli K-12 strains MG1655 and W3110.</title>
        <authorList>
            <person name="Hayashi K."/>
            <person name="Morooka N."/>
            <person name="Yamamoto Y."/>
            <person name="Fujita K."/>
            <person name="Isono K."/>
            <person name="Choi S."/>
            <person name="Ohtsubo E."/>
            <person name="Baba T."/>
            <person name="Wanner B.L."/>
            <person name="Mori H."/>
            <person name="Horiuchi T."/>
        </authorList>
    </citation>
    <scope>NUCLEOTIDE SEQUENCE [LARGE SCALE GENOMIC DNA]</scope>
    <source>
        <strain>K12 / W3110 / ATCC 27325 / DSM 5911</strain>
    </source>
</reference>
<reference key="5">
    <citation type="journal article" date="1993" name="J. Biol. Chem.">
        <title>A novel binding protein of the origin of the Escherichia coli chromosome.</title>
        <authorList>
            <person name="Skarstad K."/>
            <person name="Thoeny B."/>
            <person name="Hwang D.S."/>
            <person name="Kornberg A."/>
        </authorList>
    </citation>
    <scope>NUCLEOTIDE SEQUENCE [GENOMIC DNA] OF 1-28</scope>
    <source>
        <strain>K12 / W3110 / ATCC 27325 / DSM 5911</strain>
    </source>
</reference>
<reference key="6">
    <citation type="journal article" date="2008" name="J. Bacteriol.">
        <title>Defining the growth conditions and promoter-proximal DNA sequences required for activation of gene expression by CreBC in Escherichia coli.</title>
        <authorList>
            <person name="Cariss S.J."/>
            <person name="Tayler A.E."/>
            <person name="Avison M.B."/>
        </authorList>
    </citation>
    <scope>DISRUPTION PHENOTYPE</scope>
    <source>
        <strain>K12 / DH5-alpha</strain>
    </source>
</reference>
<comment type="disruption phenotype">
    <text evidence="2">No crucial effects on activation of cre regulon gene expression during aerobic growth on glucose or pyruvate minimal medium or during anaerobic growth on glucose minimal medium.</text>
</comment>